<name>LUXC_PHOPO</name>
<evidence type="ECO:0000269" key="1">
    <source>
    </source>
</evidence>
<evidence type="ECO:0000305" key="2"/>
<evidence type="ECO:0000312" key="3">
    <source>
        <dbReference type="EMBL" id="BAF92773.1"/>
    </source>
</evidence>
<evidence type="ECO:0007829" key="4">
    <source>
        <dbReference type="PDB" id="7XC6"/>
    </source>
</evidence>
<comment type="function">
    <text evidence="1">LuxC is the fatty acid reductase enzyme responsible for synthesis of the aldehyde substrate for the luminescent reaction catalyzed by luciferase.</text>
</comment>
<comment type="catalytic activity">
    <reaction evidence="1">
        <text>a long-chain fatty aldehyde + NADP(+) + CoA = a long-chain fatty acyl-CoA + NADPH + H(+)</text>
        <dbReference type="Rhea" id="RHEA:15437"/>
        <dbReference type="ChEBI" id="CHEBI:15378"/>
        <dbReference type="ChEBI" id="CHEBI:17176"/>
        <dbReference type="ChEBI" id="CHEBI:57287"/>
        <dbReference type="ChEBI" id="CHEBI:57783"/>
        <dbReference type="ChEBI" id="CHEBI:58349"/>
        <dbReference type="ChEBI" id="CHEBI:83139"/>
        <dbReference type="EC" id="1.2.1.50"/>
    </reaction>
</comment>
<comment type="pathway">
    <text>Lipid metabolism; fatty acid reduction for biolumincescence.</text>
</comment>
<comment type="similarity">
    <text evidence="2">Belongs to the LuxC family.</text>
</comment>
<reference key="1">
    <citation type="submission" date="2007-11" db="EMBL/GenBank/DDBJ databases">
        <title>Nucleotide sequence of the lux operon and its upstream region of Photobacterium phosphoreum, strain ABC.</title>
        <authorList>
            <person name="Kasai S."/>
        </authorList>
    </citation>
    <scope>NUCLEOTIDE SEQUENCE [GENOMIC DNA]</scope>
    <source>
        <strain evidence="3">ABC</strain>
    </source>
</reference>
<reference key="2">
    <citation type="journal article" date="1990" name="Nucleic Acids Res.">
        <title>The lumazine protein gene in Photobacterium phosphoreum is linked to the lux operon.</title>
        <authorList>
            <person name="Prasher D.C."/>
            <person name="O'Kane D."/>
            <person name="Lee J."/>
            <person name="Woodward B."/>
        </authorList>
    </citation>
    <scope>NUCLEOTIDE SEQUENCE [GENOMIC DNA] OF 1-371</scope>
    <source>
        <strain>A13</strain>
    </source>
</reference>
<reference key="3">
    <citation type="journal article" date="1991" name="J. Biol. Chem.">
        <title>A lux-specific myristoyl transferase in luminescent bacteria related to eukaryotic serine esterases.</title>
        <authorList>
            <person name="Ferri S.R."/>
            <person name="Meighen E.A."/>
        </authorList>
    </citation>
    <scope>NUCLEOTIDE SEQUENCE [GENOMIC DNA] OF 478-488</scope>
</reference>
<reference key="4">
    <citation type="journal article" date="1982" name="J. Biol. Chem.">
        <title>Resolution of the fatty acid reductase from Photobacterium phosphoreum into acyl protein synthetase and acyl-CoA reductase activities. Evidence for an enzyme complex.</title>
        <authorList>
            <person name="Riendeau D."/>
            <person name="Rodriguez A."/>
            <person name="Meighen E."/>
        </authorList>
    </citation>
    <scope>FUNCTION</scope>
    <scope>CATALYTIC ACTIVITY</scope>
</reference>
<sequence>MCNAEFKGDCMIKKIPMIIGGAERDTSEHEYRELTLNSYKVSIPIINQDDVEAIKSQSVENNLNINQIVNFLYTVGQKWKSENYSRRLTYIRDLVRFLGYSPEMAKLEANWISMILSSKSALYDIVETELGSRHIVDEWLPQGDCYVKAMPKGKSVHLLAGNVPLSGVTSIIRAILTKNECIIKTSSADPFTAIALASSFIDTDEHHPISRSMSVMYWSHNEDIAIPQQIMNCADVVVSWGGYDAIKWATEHTPVNVDILKFGPKKSIAIVDNPVDITASAIGVAHDICFYDQQACFSTQDIYYIGDNIDAFFDELVEQLNLYMDILPKGDQTFDEKASFSLIEKECQFAKYKVEKGDNQSWLLVKSPLGSFGNQPLARSAYIHHVSDISEITPYIENRITQTVTVTPWESSFKYRDVLASHGAERIVESGMNNIFRVGGAHDGMRPLQRLVKYISHERPYTYSTKDVAVKIEQTRYLEEDKFLVFVP</sequence>
<protein>
    <recommendedName>
        <fullName evidence="2">Long-chain acyl-protein thioester reductase</fullName>
        <ecNumber evidence="1">1.2.1.50</ecNumber>
    </recommendedName>
    <alternativeName>
        <fullName>Acyl-CoA reductase</fullName>
    </alternativeName>
</protein>
<gene>
    <name type="primary">luxC</name>
</gene>
<feature type="chain" id="PRO_0000220200" description="Long-chain acyl-protein thioester reductase">
    <location>
        <begin position="1"/>
        <end position="488"/>
    </location>
</feature>
<feature type="sequence conflict" description="In Ref. 2; CAA38506." evidence="2" ref="2">
    <original>S</original>
    <variation>N</variation>
    <location>
        <position position="58"/>
    </location>
</feature>
<feature type="strand" evidence="4">
    <location>
        <begin position="18"/>
        <end position="23"/>
    </location>
</feature>
<feature type="strand" evidence="4">
    <location>
        <begin position="27"/>
        <end position="29"/>
    </location>
</feature>
<feature type="strand" evidence="4">
    <location>
        <begin position="31"/>
        <end position="33"/>
    </location>
</feature>
<feature type="strand" evidence="4">
    <location>
        <begin position="36"/>
        <end position="39"/>
    </location>
</feature>
<feature type="strand" evidence="4">
    <location>
        <begin position="41"/>
        <end position="44"/>
    </location>
</feature>
<feature type="helix" evidence="4">
    <location>
        <begin position="48"/>
        <end position="55"/>
    </location>
</feature>
<feature type="helix" evidence="4">
    <location>
        <begin position="65"/>
        <end position="80"/>
    </location>
</feature>
<feature type="helix" evidence="4">
    <location>
        <begin position="85"/>
        <end position="97"/>
    </location>
</feature>
<feature type="helix" evidence="4">
    <location>
        <begin position="102"/>
        <end position="117"/>
    </location>
</feature>
<feature type="helix" evidence="4">
    <location>
        <begin position="119"/>
        <end position="130"/>
    </location>
</feature>
<feature type="turn" evidence="4">
    <location>
        <begin position="133"/>
        <end position="137"/>
    </location>
</feature>
<feature type="strand" evidence="4">
    <location>
        <begin position="143"/>
        <end position="151"/>
    </location>
</feature>
<feature type="strand" evidence="4">
    <location>
        <begin position="154"/>
        <end position="158"/>
    </location>
</feature>
<feature type="helix" evidence="4">
    <location>
        <begin position="164"/>
        <end position="176"/>
    </location>
</feature>
<feature type="strand" evidence="4">
    <location>
        <begin position="181"/>
        <end position="184"/>
    </location>
</feature>
<feature type="helix" evidence="4">
    <location>
        <begin position="192"/>
        <end position="203"/>
    </location>
</feature>
<feature type="helix" evidence="4">
    <location>
        <begin position="210"/>
        <end position="212"/>
    </location>
</feature>
<feature type="strand" evidence="4">
    <location>
        <begin position="213"/>
        <end position="216"/>
    </location>
</feature>
<feature type="strand" evidence="4">
    <location>
        <begin position="220"/>
        <end position="222"/>
    </location>
</feature>
<feature type="helix" evidence="4">
    <location>
        <begin position="225"/>
        <end position="232"/>
    </location>
</feature>
<feature type="strand" evidence="4">
    <location>
        <begin position="235"/>
        <end position="239"/>
    </location>
</feature>
<feature type="helix" evidence="4">
    <location>
        <begin position="243"/>
        <end position="251"/>
    </location>
</feature>
<feature type="strand" evidence="4">
    <location>
        <begin position="259"/>
        <end position="261"/>
    </location>
</feature>
<feature type="strand" evidence="4">
    <location>
        <begin position="267"/>
        <end position="271"/>
    </location>
</feature>
<feature type="helix" evidence="4">
    <location>
        <begin position="277"/>
        <end position="289"/>
    </location>
</feature>
<feature type="helix" evidence="4">
    <location>
        <begin position="290"/>
        <end position="293"/>
    </location>
</feature>
<feature type="strand" evidence="4">
    <location>
        <begin position="298"/>
        <end position="304"/>
    </location>
</feature>
<feature type="helix" evidence="4">
    <location>
        <begin position="309"/>
        <end position="326"/>
    </location>
</feature>
<feature type="helix" evidence="4">
    <location>
        <begin position="334"/>
        <end position="348"/>
    </location>
</feature>
<feature type="turn" evidence="4">
    <location>
        <begin position="349"/>
        <end position="351"/>
    </location>
</feature>
<feature type="strand" evidence="4">
    <location>
        <begin position="354"/>
        <end position="356"/>
    </location>
</feature>
<feature type="strand" evidence="4">
    <location>
        <begin position="363"/>
        <end position="366"/>
    </location>
</feature>
<feature type="turn" evidence="4">
    <location>
        <begin position="377"/>
        <end position="379"/>
    </location>
</feature>
<feature type="strand" evidence="4">
    <location>
        <begin position="380"/>
        <end position="385"/>
    </location>
</feature>
<feature type="helix" evidence="4">
    <location>
        <begin position="389"/>
        <end position="391"/>
    </location>
</feature>
<feature type="helix" evidence="4">
    <location>
        <begin position="393"/>
        <end position="395"/>
    </location>
</feature>
<feature type="turn" evidence="4">
    <location>
        <begin position="398"/>
        <end position="400"/>
    </location>
</feature>
<feature type="strand" evidence="4">
    <location>
        <begin position="404"/>
        <end position="408"/>
    </location>
</feature>
<feature type="helix" evidence="4">
    <location>
        <begin position="409"/>
        <end position="413"/>
    </location>
</feature>
<feature type="helix" evidence="4">
    <location>
        <begin position="416"/>
        <end position="421"/>
    </location>
</feature>
<feature type="strand" evidence="4">
    <location>
        <begin position="442"/>
        <end position="445"/>
    </location>
</feature>
<feature type="helix" evidence="4">
    <location>
        <begin position="447"/>
        <end position="449"/>
    </location>
</feature>
<feature type="strand" evidence="4">
    <location>
        <begin position="450"/>
        <end position="458"/>
    </location>
</feature>
<feature type="turn" evidence="4">
    <location>
        <begin position="466"/>
        <end position="468"/>
    </location>
</feature>
<feature type="helix" evidence="4">
    <location>
        <begin position="474"/>
        <end position="480"/>
    </location>
</feature>
<feature type="turn" evidence="4">
    <location>
        <begin position="484"/>
        <end position="486"/>
    </location>
</feature>
<organism>
    <name type="scientific">Photobacterium phosphoreum</name>
    <dbReference type="NCBI Taxonomy" id="659"/>
    <lineage>
        <taxon>Bacteria</taxon>
        <taxon>Pseudomonadati</taxon>
        <taxon>Pseudomonadota</taxon>
        <taxon>Gammaproteobacteria</taxon>
        <taxon>Vibrionales</taxon>
        <taxon>Vibrionaceae</taxon>
        <taxon>Photobacterium</taxon>
    </lineage>
</organism>
<dbReference type="EC" id="1.2.1.50" evidence="1"/>
<dbReference type="EMBL" id="AB367391">
    <property type="protein sequence ID" value="BAF92773.1"/>
    <property type="molecule type" value="Genomic_DNA"/>
</dbReference>
<dbReference type="EMBL" id="X54690">
    <property type="protein sequence ID" value="CAA38506.1"/>
    <property type="molecule type" value="Genomic_DNA"/>
</dbReference>
<dbReference type="EMBL" id="M64224">
    <property type="protein sequence ID" value="AAA25625.1"/>
    <property type="molecule type" value="Genomic_DNA"/>
</dbReference>
<dbReference type="PIR" id="B39853">
    <property type="entry name" value="B39853"/>
</dbReference>
<dbReference type="PIR" id="S12116">
    <property type="entry name" value="S12116"/>
</dbReference>
<dbReference type="PDB" id="7XC6">
    <property type="method" value="EM"/>
    <property type="resolution" value="2.79 A"/>
    <property type="chains" value="A/B/C/D=12-488"/>
</dbReference>
<dbReference type="PDBsum" id="7XC6"/>
<dbReference type="EMDB" id="EMD-33113"/>
<dbReference type="SMR" id="P19841"/>
<dbReference type="STRING" id="659.AYY26_10995"/>
<dbReference type="BioCyc" id="MetaCyc:MONOMER-19532"/>
<dbReference type="UniPathway" id="UPA00569"/>
<dbReference type="GO" id="GO:0003995">
    <property type="term" value="F:acyl-CoA dehydrogenase activity"/>
    <property type="evidence" value="ECO:0007669"/>
    <property type="project" value="InterPro"/>
</dbReference>
<dbReference type="GO" id="GO:0050062">
    <property type="term" value="F:long-chain-fatty-acyl-CoA reductase activity"/>
    <property type="evidence" value="ECO:0000314"/>
    <property type="project" value="CACAO"/>
</dbReference>
<dbReference type="GO" id="GO:0008218">
    <property type="term" value="P:bioluminescence"/>
    <property type="evidence" value="ECO:0007669"/>
    <property type="project" value="UniProtKB-KW"/>
</dbReference>
<dbReference type="CDD" id="cd07080">
    <property type="entry name" value="ALDH_Acyl-CoA-Red_LuxC"/>
    <property type="match status" value="1"/>
</dbReference>
<dbReference type="Gene3D" id="3.40.605.10">
    <property type="entry name" value="Aldehyde Dehydrogenase, Chain A, domain 1"/>
    <property type="match status" value="1"/>
</dbReference>
<dbReference type="Gene3D" id="3.40.309.10">
    <property type="entry name" value="Aldehyde Dehydrogenase, Chain A, domain 2"/>
    <property type="match status" value="1"/>
</dbReference>
<dbReference type="InterPro" id="IPR016161">
    <property type="entry name" value="Ald_DH/histidinol_DH"/>
</dbReference>
<dbReference type="InterPro" id="IPR016163">
    <property type="entry name" value="Ald_DH_C"/>
</dbReference>
<dbReference type="InterPro" id="IPR016162">
    <property type="entry name" value="Ald_DH_N"/>
</dbReference>
<dbReference type="InterPro" id="IPR008670">
    <property type="entry name" value="CoA_reduct_LuxC"/>
</dbReference>
<dbReference type="Pfam" id="PF05893">
    <property type="entry name" value="LuxC"/>
    <property type="match status" value="1"/>
</dbReference>
<dbReference type="PIRSF" id="PIRSF009414">
    <property type="entry name" value="LuxC"/>
    <property type="match status" value="1"/>
</dbReference>
<dbReference type="SUPFAM" id="SSF53720">
    <property type="entry name" value="ALDH-like"/>
    <property type="match status" value="1"/>
</dbReference>
<accession>P19841</accession>
<accession>A8R7C6</accession>
<keyword id="KW-0002">3D-structure</keyword>
<keyword id="KW-0455">Luminescence</keyword>
<keyword id="KW-0521">NADP</keyword>
<keyword id="KW-0560">Oxidoreductase</keyword>
<proteinExistence type="evidence at protein level"/>